<comment type="function">
    <text evidence="7 13">Catalyzes interconversion of 3- and 2-phosphoglycerate with 2,3-bisphosphoglycerate (2,3-BPG) as the primer of the reaction (PubMed:36083036). Schistosomula have significant surface phosphoglycerate mutase activity also without 2,3-BPG (PubMed:36083036). Binds human plasminogen and enhances its conversion to active thrombolytic plasmin in the presence of human tissue plasminogen activator (tPA) in vitro (PubMed:36083036). Host-interactive surface protein, which may degrade vascular blood clots surrounding the worm in vivo and thus may help survival of the parasite in its host microenvironment (Probable).</text>
</comment>
<comment type="catalytic activity">
    <reaction evidence="7">
        <text>(2R)-2-phosphoglycerate = (2R)-3-phosphoglycerate</text>
        <dbReference type="Rhea" id="RHEA:15901"/>
        <dbReference type="ChEBI" id="CHEBI:58272"/>
        <dbReference type="ChEBI" id="CHEBI:58289"/>
        <dbReference type="EC" id="5.4.2.11"/>
    </reaction>
</comment>
<comment type="activity regulation">
    <text evidence="7">Strongly activated by 2,3-bisphosphoglycerate (2,3-BPG). Inhibited by vanadate in a dose-dependent manner.</text>
</comment>
<comment type="biophysicochemical properties">
    <kinetics>
        <KM evidence="7">0.85 mM for 3-phosphoglycerate in the presence of 2,3-bisphosphoglycerate (at pH 7.8)</KM>
    </kinetics>
</comment>
<comment type="pathway">
    <text evidence="14">Carbohydrate degradation; glycolysis; pyruvate from D-glyceraldehyde 3-phosphate: step 3/5.</text>
</comment>
<comment type="subcellular location">
    <subcellularLocation>
        <location evidence="3 4 5 6 7">Tegument</location>
    </subcellularLocation>
    <text evidence="3 4 5 6 7">Exposed on the tegumental surface (PubMed:21468311, PubMed:25910674, PubMed:36083036). Associated with the tegumental surface membranes (PubMed:15952743, PubMed:16447162). Not secreted or released to the culture medium (PubMed:36083036).</text>
</comment>
<comment type="tissue specificity">
    <text evidence="3 4 5 7">Ubiquitously expressed with the highest expression in the sub-tegumental muscle layer (at protein level) (PubMed:36083036). Expressed in the tegument (at protein level) (PubMed:15952743, PubMed:16447162, PubMed:21468311, PubMed:36083036).</text>
</comment>
<comment type="developmental stage">
    <text evidence="5 6 7">Ubiquitously expressed in juvenile intravascular stage schistosomula (PubMed:36083036). Expressed on the tegument surface of the schistosomula (PubMed:36083036). Expressed in the tegument of the host lung stage schistosomula (PubMed:21468311). Expressed in the sub-tegumental tissues of the schistosomula (PubMed:25910674).</text>
</comment>
<comment type="disruption phenotype">
    <text evidence="7">RNAi-mediated knockdown results in significantly decreased enzyme activity on the outer surface of the worm. No effect on motility, morphology or viability during culturing for 7 days.</text>
</comment>
<comment type="similarity">
    <text evidence="13">Belongs to the phosphoglycerate mutase family. BPG-dependent PGAM subfamily.</text>
</comment>
<accession>G4VJD5</accession>
<gene>
    <name evidence="13" type="ORF">Smp_096760</name>
</gene>
<evidence type="ECO:0000250" key="1">
    <source>
        <dbReference type="UniProtKB" id="P00950"/>
    </source>
</evidence>
<evidence type="ECO:0000250" key="2">
    <source>
        <dbReference type="UniProtKB" id="Q3JWH7"/>
    </source>
</evidence>
<evidence type="ECO:0000269" key="3">
    <source>
    </source>
</evidence>
<evidence type="ECO:0000269" key="4">
    <source>
    </source>
</evidence>
<evidence type="ECO:0000269" key="5">
    <source>
    </source>
</evidence>
<evidence type="ECO:0000269" key="6">
    <source>
    </source>
</evidence>
<evidence type="ECO:0000269" key="7">
    <source>
    </source>
</evidence>
<evidence type="ECO:0000303" key="8">
    <source>
    </source>
</evidence>
<evidence type="ECO:0000303" key="9">
    <source>
    </source>
</evidence>
<evidence type="ECO:0000303" key="10">
    <source>
    </source>
</evidence>
<evidence type="ECO:0000303" key="11">
    <source>
    </source>
</evidence>
<evidence type="ECO:0000303" key="12">
    <source>
    </source>
</evidence>
<evidence type="ECO:0000305" key="13"/>
<evidence type="ECO:0000305" key="14">
    <source>
    </source>
</evidence>
<evidence type="ECO:0000312" key="15">
    <source>
        <dbReference type="EMBL" id="UFA46002.1"/>
    </source>
</evidence>
<evidence type="ECO:0000312" key="16">
    <source>
        <dbReference type="Proteomes" id="UP000008854"/>
    </source>
</evidence>
<evidence type="ECO:0000312" key="17">
    <source>
        <dbReference type="WBParaSite" id="Smp_096760.1"/>
    </source>
</evidence>
<organism evidence="16">
    <name type="scientific">Schistosoma mansoni</name>
    <name type="common">Blood fluke</name>
    <dbReference type="NCBI Taxonomy" id="6183"/>
    <lineage>
        <taxon>Eukaryota</taxon>
        <taxon>Metazoa</taxon>
        <taxon>Spiralia</taxon>
        <taxon>Lophotrochozoa</taxon>
        <taxon>Platyhelminthes</taxon>
        <taxon>Trematoda</taxon>
        <taxon>Digenea</taxon>
        <taxon>Strigeidida</taxon>
        <taxon>Schistosomatoidea</taxon>
        <taxon>Schistosomatidae</taxon>
        <taxon>Schistosoma</taxon>
    </lineage>
</organism>
<proteinExistence type="evidence at protein level"/>
<dbReference type="EC" id="5.4.2.11" evidence="7"/>
<dbReference type="EMBL" id="OK490368">
    <property type="protein sequence ID" value="UFA46002.1"/>
    <property type="molecule type" value="mRNA"/>
</dbReference>
<dbReference type="EMBL" id="HE601627">
    <property type="protein sequence ID" value="CCD79536.1"/>
    <property type="molecule type" value="Genomic_DNA"/>
</dbReference>
<dbReference type="RefSeq" id="XP_018652140.1">
    <property type="nucleotide sequence ID" value="XM_018797061.1"/>
</dbReference>
<dbReference type="SMR" id="G4VJD5"/>
<dbReference type="FunCoup" id="G4VJD5">
    <property type="interactions" value="764"/>
</dbReference>
<dbReference type="STRING" id="6183.Smp_096760.1"/>
<dbReference type="EnsemblMetazoa" id="Smp_096760.1">
    <property type="protein sequence ID" value="Smp_096760.1"/>
    <property type="gene ID" value="Smp_096760"/>
</dbReference>
<dbReference type="EnsemblMetazoa" id="Smp_096760.2">
    <property type="protein sequence ID" value="Smp_096760.2"/>
    <property type="gene ID" value="Smp_096760"/>
</dbReference>
<dbReference type="GeneID" id="8344549"/>
<dbReference type="KEGG" id="smm:Smp_096760"/>
<dbReference type="WBParaSite" id="Smp_096760.1">
    <property type="protein sequence ID" value="Smp_096760.1"/>
    <property type="gene ID" value="Smp_096760"/>
</dbReference>
<dbReference type="CTD" id="8344549"/>
<dbReference type="eggNOG" id="KOG0235">
    <property type="taxonomic scope" value="Eukaryota"/>
</dbReference>
<dbReference type="HOGENOM" id="CLU_033323_1_1_1"/>
<dbReference type="InParanoid" id="G4VJD5"/>
<dbReference type="OMA" id="MLPYWYD"/>
<dbReference type="OrthoDB" id="354304at2759"/>
<dbReference type="UniPathway" id="UPA00109">
    <property type="reaction ID" value="UER00186"/>
</dbReference>
<dbReference type="Proteomes" id="UP000008854">
    <property type="component" value="Unassembled WGS sequence"/>
</dbReference>
<dbReference type="GO" id="GO:0004619">
    <property type="term" value="F:phosphoglycerate mutase activity"/>
    <property type="evidence" value="ECO:0000314"/>
    <property type="project" value="UniProtKB"/>
</dbReference>
<dbReference type="GO" id="GO:0061621">
    <property type="term" value="P:canonical glycolysis"/>
    <property type="evidence" value="ECO:0000270"/>
    <property type="project" value="UniProtKB"/>
</dbReference>
<dbReference type="GO" id="GO:0044542">
    <property type="term" value="P:symbiont-mediated activation of host plasminogen"/>
    <property type="evidence" value="ECO:0000314"/>
    <property type="project" value="UniProtKB"/>
</dbReference>
<dbReference type="CDD" id="cd07067">
    <property type="entry name" value="HP_PGM_like"/>
    <property type="match status" value="1"/>
</dbReference>
<dbReference type="FunFam" id="3.40.50.1240:FF:000003">
    <property type="entry name" value="2,3-bisphosphoglycerate-dependent phosphoglycerate mutase"/>
    <property type="match status" value="1"/>
</dbReference>
<dbReference type="Gene3D" id="3.40.50.1240">
    <property type="entry name" value="Phosphoglycerate mutase-like"/>
    <property type="match status" value="1"/>
</dbReference>
<dbReference type="HAMAP" id="MF_01039">
    <property type="entry name" value="PGAM_GpmA"/>
    <property type="match status" value="1"/>
</dbReference>
<dbReference type="InterPro" id="IPR013078">
    <property type="entry name" value="His_Pase_superF_clade-1"/>
</dbReference>
<dbReference type="InterPro" id="IPR029033">
    <property type="entry name" value="His_PPase_superfam"/>
</dbReference>
<dbReference type="InterPro" id="IPR005952">
    <property type="entry name" value="Phosphogly_mut1"/>
</dbReference>
<dbReference type="NCBIfam" id="TIGR01258">
    <property type="entry name" value="pgm_1"/>
    <property type="match status" value="1"/>
</dbReference>
<dbReference type="NCBIfam" id="NF010713">
    <property type="entry name" value="PRK14115.1"/>
    <property type="match status" value="1"/>
</dbReference>
<dbReference type="PANTHER" id="PTHR11931">
    <property type="entry name" value="PHOSPHOGLYCERATE MUTASE"/>
    <property type="match status" value="1"/>
</dbReference>
<dbReference type="Pfam" id="PF00300">
    <property type="entry name" value="His_Phos_1"/>
    <property type="match status" value="2"/>
</dbReference>
<dbReference type="PIRSF" id="PIRSF000709">
    <property type="entry name" value="6PFK_2-Ptase"/>
    <property type="match status" value="1"/>
</dbReference>
<dbReference type="SMART" id="SM00855">
    <property type="entry name" value="PGAM"/>
    <property type="match status" value="1"/>
</dbReference>
<dbReference type="SUPFAM" id="SSF53254">
    <property type="entry name" value="Phosphoglycerate mutase-like"/>
    <property type="match status" value="1"/>
</dbReference>
<feature type="chain" id="PRO_0000459794" description="2,3-bisphosphoglycerate-dependent phosphoglycerate mutase">
    <location>
        <begin position="1"/>
        <end position="250"/>
    </location>
</feature>
<feature type="active site" description="Tele-phosphohistidine intermediate" evidence="1">
    <location>
        <position position="11"/>
    </location>
</feature>
<feature type="active site" description="Proton donor/acceptor" evidence="1">
    <location>
        <position position="89"/>
    </location>
</feature>
<feature type="binding site" evidence="2">
    <location>
        <position position="10"/>
    </location>
    <ligand>
        <name>(2R)-2,3-bisphosphoglycerate</name>
        <dbReference type="ChEBI" id="CHEBI:58248"/>
    </ligand>
</feature>
<feature type="binding site" evidence="2">
    <location>
        <position position="11"/>
    </location>
    <ligand>
        <name>(2R)-2,3-bisphosphoglycerate</name>
        <dbReference type="ChEBI" id="CHEBI:58248"/>
    </ligand>
</feature>
<feature type="binding site" evidence="2">
    <location>
        <position position="17"/>
    </location>
    <ligand>
        <name>(2R)-2,3-bisphosphoglycerate</name>
        <dbReference type="ChEBI" id="CHEBI:58248"/>
    </ligand>
</feature>
<feature type="binding site" evidence="2">
    <location>
        <position position="24"/>
    </location>
    <ligand>
        <name>(2R)-2,3-bisphosphoglycerate</name>
        <dbReference type="ChEBI" id="CHEBI:58248"/>
    </ligand>
</feature>
<feature type="binding site" evidence="2">
    <location>
        <position position="24"/>
    </location>
    <ligand>
        <name>(2R)-3-phosphoglycerate</name>
        <dbReference type="ChEBI" id="CHEBI:58272"/>
    </ligand>
</feature>
<feature type="binding site" evidence="2">
    <location>
        <position position="62"/>
    </location>
    <ligand>
        <name>(2R)-2,3-bisphosphoglycerate</name>
        <dbReference type="ChEBI" id="CHEBI:58248"/>
    </ligand>
</feature>
<feature type="binding site" evidence="2">
    <location>
        <position position="89"/>
    </location>
    <ligand>
        <name>(2R)-2,3-bisphosphoglycerate</name>
        <dbReference type="ChEBI" id="CHEBI:58248"/>
    </ligand>
</feature>
<feature type="binding site" evidence="2">
    <location>
        <position position="89"/>
    </location>
    <ligand>
        <name>(2R)-3-phosphoglycerate</name>
        <dbReference type="ChEBI" id="CHEBI:58272"/>
    </ligand>
</feature>
<feature type="binding site" evidence="2">
    <location>
        <position position="92"/>
    </location>
    <ligand>
        <name>(2R)-2,3-bisphosphoglycerate</name>
        <dbReference type="ChEBI" id="CHEBI:58248"/>
    </ligand>
</feature>
<feature type="binding site" evidence="2">
    <location>
        <position position="92"/>
    </location>
    <ligand>
        <name>(2R)-3-phosphoglycerate</name>
        <dbReference type="ChEBI" id="CHEBI:58272"/>
    </ligand>
</feature>
<feature type="binding site" evidence="2">
    <location>
        <position position="100"/>
    </location>
    <ligand>
        <name>(2R)-2,3-bisphosphoglycerate</name>
        <dbReference type="ChEBI" id="CHEBI:58248"/>
    </ligand>
</feature>
<feature type="binding site" evidence="2">
    <location>
        <position position="100"/>
    </location>
    <ligand>
        <name>(2R)-3-phosphoglycerate</name>
        <dbReference type="ChEBI" id="CHEBI:58272"/>
    </ligand>
</feature>
<feature type="binding site" evidence="2">
    <location>
        <position position="116"/>
    </location>
    <ligand>
        <name>(2R)-2,3-bisphosphoglycerate</name>
        <dbReference type="ChEBI" id="CHEBI:58248"/>
    </ligand>
</feature>
<feature type="binding site" evidence="2">
    <location>
        <position position="116"/>
    </location>
    <ligand>
        <name>(2R)-3-phosphoglycerate</name>
        <dbReference type="ChEBI" id="CHEBI:58272"/>
    </ligand>
</feature>
<feature type="binding site" evidence="2">
    <location>
        <position position="117"/>
    </location>
    <ligand>
        <name>(2R)-2,3-bisphosphoglycerate</name>
        <dbReference type="ChEBI" id="CHEBI:58248"/>
    </ligand>
</feature>
<feature type="binding site" evidence="2">
    <location>
        <position position="117"/>
    </location>
    <ligand>
        <name>(2R)-3-phosphoglycerate</name>
        <dbReference type="ChEBI" id="CHEBI:58272"/>
    </ligand>
</feature>
<feature type="binding site" evidence="2">
    <location>
        <position position="184"/>
    </location>
    <ligand>
        <name>(2R)-2,3-bisphosphoglycerate</name>
        <dbReference type="ChEBI" id="CHEBI:58248"/>
    </ligand>
</feature>
<feature type="binding site" evidence="2">
    <location>
        <position position="185"/>
    </location>
    <ligand>
        <name>(2R)-2,3-bisphosphoglycerate</name>
        <dbReference type="ChEBI" id="CHEBI:58248"/>
    </ligand>
</feature>
<feature type="binding site" evidence="2">
    <location>
        <position position="186"/>
    </location>
    <ligand>
        <name>(2R)-2,3-bisphosphoglycerate</name>
        <dbReference type="ChEBI" id="CHEBI:58248"/>
    </ligand>
</feature>
<feature type="binding site" evidence="2">
    <location>
        <position position="186"/>
    </location>
    <ligand>
        <name>(2R)-3-phosphoglycerate</name>
        <dbReference type="ChEBI" id="CHEBI:58272"/>
    </ligand>
</feature>
<feature type="site" description="Transition state stabilizer" evidence="1">
    <location>
        <position position="184"/>
    </location>
</feature>
<keyword id="KW-0903">Direct protein sequencing</keyword>
<keyword id="KW-0324">Glycolysis</keyword>
<keyword id="KW-0413">Isomerase</keyword>
<keyword id="KW-1185">Reference proteome</keyword>
<protein>
    <recommendedName>
        <fullName evidence="12">2,3-bisphosphoglycerate-dependent phosphoglycerate mutase</fullName>
        <shortName evidence="12">2,3-BPG-dependent PGM</shortName>
        <shortName evidence="12">dPGM</shortName>
        <ecNumber evidence="7">5.4.2.11</ecNumber>
    </recommendedName>
    <alternativeName>
        <fullName evidence="8 9 10 11 12 15 17">Phosphoglycerate mutase</fullName>
        <shortName evidence="12">PGM</shortName>
    </alternativeName>
    <alternativeName>
        <fullName evidence="12">SmPGM</fullName>
    </alternativeName>
</protein>
<name>PGM_SCHMA</name>
<sequence>MAPYRIVFIRHGESVYNEENRFCGWHDADLSGQGITEAKQAGQLLRQNHFTFDIAYTSVLKRAIKTLNFVLDELDLNWIPVTKTWRLNERMYGALQGLNKSETAAKHGEEQVKIWRRAYDIPPPPVDISDPRFPGNEPKYALLDSSCIPRTECLKDTVQRVLPFWFDTISASIKRREQVLIVAHGNSLRALIKYLDNTSDSDIVELNIPTGIPLVYELDANLKPTKHYYLADEATVAAAIARVANQGKKK</sequence>
<reference evidence="15" key="1">
    <citation type="journal article" date="2022" name="Parasite">
        <title>Schistosoma mansoni phosphoglycerate mutase: a glycolytic ectoenzyme with thrombolytic potential.</title>
        <authorList>
            <person name="Pirovich D.B."/>
            <person name="Da'dara A.A."/>
            <person name="Skelly P.J."/>
        </authorList>
    </citation>
    <scope>NUCLEOTIDE SEQUENCE [MRNA]</scope>
    <scope>FUNCTION</scope>
    <scope>CATALYTIC ACTIVITY</scope>
    <scope>ACTIVITY REGULATION</scope>
    <scope>BIOPHYSICOCHEMICAL PROPERTIES</scope>
    <scope>PATHWAY</scope>
    <scope>SUBCELLULAR LOCATION</scope>
    <scope>TISSUE SPECIFICITY</scope>
    <scope>DEVELOPMENTAL STAGE</scope>
    <scope>DISRUPTION PHENOTYPE</scope>
    <source>
        <strain evidence="12">NMRI</strain>
    </source>
</reference>
<reference evidence="16" key="2">
    <citation type="journal article" date="2012" name="PLoS Negl. Trop. Dis.">
        <title>A systematically improved high quality genome and transcriptome of the human blood fluke Schistosoma mansoni.</title>
        <authorList>
            <person name="Protasio A.V."/>
            <person name="Tsai I.J."/>
            <person name="Babbage A."/>
            <person name="Nichol S."/>
            <person name="Hunt M."/>
            <person name="Aslett M.A."/>
            <person name="De Silva N."/>
            <person name="Velarde G.S."/>
            <person name="Anderson T.J."/>
            <person name="Clark R.C."/>
            <person name="Davidson C."/>
            <person name="Dillon G.P."/>
            <person name="Holroyd N.E."/>
            <person name="LoVerde P.T."/>
            <person name="Lloyd C."/>
            <person name="McQuillan J."/>
            <person name="Oliveira G."/>
            <person name="Otto T.D."/>
            <person name="Parker-Manuel S.J."/>
            <person name="Quail M.A."/>
            <person name="Wilson R.A."/>
            <person name="Zerlotini A."/>
            <person name="Dunne D.W."/>
            <person name="Berriman M."/>
        </authorList>
    </citation>
    <scope>NUCLEOTIDE SEQUENCE [LARGE SCALE GENOMIC DNA]</scope>
    <source>
        <strain evidence="16">Puerto Rican</strain>
    </source>
</reference>
<reference key="3">
    <citation type="journal article" date="2011" name="PLoS Negl. Trop. Dis.">
        <title>Enzymatic shaving of the tegument surface of live schistosomes for proteomic analysis: a rational approach to select vaccine candidates.</title>
        <authorList>
            <person name="Castro-Borges W."/>
            <person name="Dowle A."/>
            <person name="Curwen R.S."/>
            <person name="Thomas-Oates J."/>
            <person name="Wilson R.A."/>
        </authorList>
    </citation>
    <scope>PROTEIN SEQUENCE OF 65-84; 139-151 AND 160-175</scope>
    <scope>IDENTIFICATION BY MASS SPECTROMETRY</scope>
    <scope>SUBCELLULAR LOCATION</scope>
    <scope>TISSUE SPECIFICITY</scope>
    <scope>DEVELOPMENTAL STAGE</scope>
    <source>
        <strain evidence="10">Puerto Rican</strain>
    </source>
</reference>
<reference key="4">
    <citation type="journal article" date="2005" name="J. Proteome Res.">
        <title>Mass spectrometric analysis of the Schistosoma mansoni tegumental sub-proteome.</title>
        <authorList>
            <person name="van Balkom B.W."/>
            <person name="van Gestel R.A."/>
            <person name="Brouwers J.F."/>
            <person name="Krijgsveld J."/>
            <person name="Tielens A.G."/>
            <person name="Heck A.J."/>
            <person name="van Hellemond J.J."/>
        </authorList>
    </citation>
    <scope>IDENTIFICATION BY MASS SPECTROMETRY</scope>
    <scope>SUBCELLULAR LOCATION</scope>
    <scope>TISSUE SPECIFICITY</scope>
</reference>
<reference key="5">
    <citation type="journal article" date="2006" name="Proteomics">
        <title>The tegument surface membranes of the human blood parasite Schistosoma mansoni: a proteomic analysis after differential extraction.</title>
        <authorList>
            <person name="Braschi S."/>
            <person name="Curwen R.S."/>
            <person name="Ashton P.D."/>
            <person name="Verjovski-Almeida S."/>
            <person name="Wilson A."/>
        </authorList>
    </citation>
    <scope>IDENTIFICATION BY MASS SPECTROMETRY</scope>
    <scope>SUBCELLULAR LOCATION</scope>
    <scope>TISSUE SPECIFICITY</scope>
    <source>
        <strain evidence="9">Puerto Rican</strain>
    </source>
</reference>
<reference key="6">
    <citation type="journal article" date="2015" name="Int. J. Parasitol.">
        <title>A quantitative proteomic analysis of the tegumental proteins from Schistosoma mansoni schistosomula reveals novel potential therapeutic targets.</title>
        <authorList>
            <person name="Sotillo J."/>
            <person name="Pearson M."/>
            <person name="Becker L."/>
            <person name="Mulvenna J."/>
            <person name="Loukas A."/>
        </authorList>
    </citation>
    <scope>IDENTIFICATION BY MASS SPECTROMETRY</scope>
    <scope>SUBCELLULAR LOCATION</scope>
    <scope>DEVELOPMENTAL STAGE</scope>
    <source>
        <strain evidence="11">Puerto Rican</strain>
    </source>
</reference>